<feature type="chain" id="PRO_0000153822" description="Small ribosomal subunit protein eS19S">
    <location>
        <begin position="1"/>
        <end position="150"/>
    </location>
</feature>
<dbReference type="EMBL" id="Z30344">
    <property type="protein sequence ID" value="CAA82999.1"/>
    <property type="molecule type" value="mRNA"/>
</dbReference>
<dbReference type="PIR" id="A54581">
    <property type="entry name" value="A54581"/>
</dbReference>
<dbReference type="SMR" id="P39698"/>
<dbReference type="GO" id="GO:0022627">
    <property type="term" value="C:cytosolic small ribosomal subunit"/>
    <property type="evidence" value="ECO:0007669"/>
    <property type="project" value="TreeGrafter"/>
</dbReference>
<dbReference type="GO" id="GO:0003723">
    <property type="term" value="F:RNA binding"/>
    <property type="evidence" value="ECO:0007669"/>
    <property type="project" value="TreeGrafter"/>
</dbReference>
<dbReference type="GO" id="GO:0003735">
    <property type="term" value="F:structural constituent of ribosome"/>
    <property type="evidence" value="ECO:0007669"/>
    <property type="project" value="InterPro"/>
</dbReference>
<dbReference type="GO" id="GO:0000028">
    <property type="term" value="P:ribosomal small subunit assembly"/>
    <property type="evidence" value="ECO:0007669"/>
    <property type="project" value="TreeGrafter"/>
</dbReference>
<dbReference type="GO" id="GO:0006412">
    <property type="term" value="P:translation"/>
    <property type="evidence" value="ECO:0007669"/>
    <property type="project" value="InterPro"/>
</dbReference>
<dbReference type="FunFam" id="1.10.10.10:FF:000118">
    <property type="entry name" value="40S ribosomal protein S19"/>
    <property type="match status" value="1"/>
</dbReference>
<dbReference type="Gene3D" id="1.10.10.10">
    <property type="entry name" value="Winged helix-like DNA-binding domain superfamily/Winged helix DNA-binding domain"/>
    <property type="match status" value="1"/>
</dbReference>
<dbReference type="InterPro" id="IPR001266">
    <property type="entry name" value="Ribosomal_eS19"/>
</dbReference>
<dbReference type="InterPro" id="IPR018277">
    <property type="entry name" value="Ribosomal_eS19_CS"/>
</dbReference>
<dbReference type="InterPro" id="IPR036388">
    <property type="entry name" value="WH-like_DNA-bd_sf"/>
</dbReference>
<dbReference type="InterPro" id="IPR036390">
    <property type="entry name" value="WH_DNA-bd_sf"/>
</dbReference>
<dbReference type="PANTHER" id="PTHR11710">
    <property type="entry name" value="40S RIBOSOMAL PROTEIN S19"/>
    <property type="match status" value="1"/>
</dbReference>
<dbReference type="PANTHER" id="PTHR11710:SF0">
    <property type="entry name" value="40S RIBOSOMAL PROTEIN S19"/>
    <property type="match status" value="1"/>
</dbReference>
<dbReference type="Pfam" id="PF01090">
    <property type="entry name" value="Ribosomal_S19e"/>
    <property type="match status" value="1"/>
</dbReference>
<dbReference type="SMART" id="SM01413">
    <property type="entry name" value="Ribosomal_S19e"/>
    <property type="match status" value="1"/>
</dbReference>
<dbReference type="SUPFAM" id="SSF46785">
    <property type="entry name" value="Winged helix' DNA-binding domain"/>
    <property type="match status" value="1"/>
</dbReference>
<dbReference type="PROSITE" id="PS00628">
    <property type="entry name" value="RIBOSOMAL_S19E"/>
    <property type="match status" value="1"/>
</dbReference>
<name>RS19S_ASCSU</name>
<comment type="developmental stage">
    <text>Present in both the somatic and germline.</text>
</comment>
<comment type="similarity">
    <text evidence="1">Belongs to the eukaryotic ribosomal protein eS19 family.</text>
</comment>
<sequence length="150" mass="16965">MVKQPSVKDVDQHEIVRYIAGFLKKSGKVKVPEWSDLVKLGITKELAPVDSDWYYVRTASVARRLYIRSPTGVGALRRVYGGNKRRGVTPNHFARASGSVIRKALQTLEAIKWVEKHPDGNGRILTKQGRKDLDRIASQMRQNTKITLEP</sequence>
<protein>
    <recommendedName>
        <fullName evidence="1">Small ribosomal subunit protein eS19S</fullName>
    </recommendedName>
    <alternativeName>
        <fullName>40S ribosomal protein S19S</fullName>
    </alternativeName>
</protein>
<evidence type="ECO:0000305" key="1"/>
<gene>
    <name type="primary">RPS19S</name>
</gene>
<reference key="1">
    <citation type="journal article" date="1994" name="Science">
        <title>Ribosomal heterogeneity from chromatin diminution in Ascaris lumbricoides.</title>
        <authorList>
            <person name="Etter A."/>
            <person name="Bernard V."/>
            <person name="Kenzelmann M."/>
            <person name="Tobler H."/>
            <person name="Mueller F."/>
        </authorList>
    </citation>
    <scope>NUCLEOTIDE SEQUENCE [MRNA]</scope>
    <source>
        <tissue>Muscle</tissue>
    </source>
</reference>
<proteinExistence type="evidence at transcript level"/>
<keyword id="KW-0687">Ribonucleoprotein</keyword>
<keyword id="KW-0689">Ribosomal protein</keyword>
<accession>P39698</accession>
<organism>
    <name type="scientific">Ascaris suum</name>
    <name type="common">Pig roundworm</name>
    <name type="synonym">Ascaris lumbricoides</name>
    <dbReference type="NCBI Taxonomy" id="6253"/>
    <lineage>
        <taxon>Eukaryota</taxon>
        <taxon>Metazoa</taxon>
        <taxon>Ecdysozoa</taxon>
        <taxon>Nematoda</taxon>
        <taxon>Chromadorea</taxon>
        <taxon>Rhabditida</taxon>
        <taxon>Spirurina</taxon>
        <taxon>Ascaridomorpha</taxon>
        <taxon>Ascaridoidea</taxon>
        <taxon>Ascarididae</taxon>
        <taxon>Ascaris</taxon>
    </lineage>
</organism>